<gene>
    <name evidence="1" type="primary">kdpB</name>
    <name type="ordered locus">ECDH10B_0763</name>
</gene>
<accession>B1X6M8</accession>
<protein>
    <recommendedName>
        <fullName evidence="1">Potassium-transporting ATPase ATP-binding subunit</fullName>
        <ecNumber evidence="1">7.2.2.6</ecNumber>
    </recommendedName>
    <alternativeName>
        <fullName evidence="1">ATP phosphohydrolase [potassium-transporting] B chain</fullName>
    </alternativeName>
    <alternativeName>
        <fullName evidence="1">Potassium-binding and translocating subunit B</fullName>
    </alternativeName>
    <alternativeName>
        <fullName evidence="1">Potassium-translocating ATPase B chain</fullName>
    </alternativeName>
</protein>
<sequence>MSRKQLALFEPTLVVQALKEAVKKLNPQAQWRNPVMFIVWIGSLLTTCISIAMASGAMPGNALFSAAISGWLWITVLFANFAEALAEGRSKAQANSLKGVKKTAFARKLREPKYGAAADKVPADQLRKGDIVLVEAGDIIPCDGEVIEGGASVDESAITGESAPVIRESGGDFASVTGGTRILSDWLVIECSVNPGETFLDRMIAMVEGAQRRKTPNEIALTILLIALTIVFLLATATLWPFSAWGGNAVSVTVLVALLVCLIPTTIGGLLSAIGVAGMSRMLGANVIATSGRAVEAAGDVDVLLLDKTGTITLGNRQASEFIPAQGVDEKTLADAAQLASLADETPEGRSIVILAKQRFNLRERDVQSLHATFVPFTAQSRMSGINIDNRMIRKGSVDAIRRHVEANGGHFPTDVDQKVDQVARQGATPLVVVEGSRVLGVIALKDIVKGGIKERFAQLRKMGIKTVMITGDNRLTAAAIAAEAGVDDFLAEATPEAKLALIRQYQAEGRLVAMTGDGTNDAPALAQADVAVAMNSGTQAAKEAGNMVDLDSNPTKLIEVVHIGKQMLMTRGSLTTFSIANDVAKYFAIIPAAFAATYPQLNALNIMCLHSPDSAILSAVIFNALIIVFLIPLALKGVSYKPLTASAMLRRNLWIYGLGGLLVPFIGIKVIDLLLTVCGLV</sequence>
<keyword id="KW-0067">ATP-binding</keyword>
<keyword id="KW-0997">Cell inner membrane</keyword>
<keyword id="KW-1003">Cell membrane</keyword>
<keyword id="KW-0406">Ion transport</keyword>
<keyword id="KW-0460">Magnesium</keyword>
<keyword id="KW-0472">Membrane</keyword>
<keyword id="KW-0479">Metal-binding</keyword>
<keyword id="KW-0547">Nucleotide-binding</keyword>
<keyword id="KW-0597">Phosphoprotein</keyword>
<keyword id="KW-0630">Potassium</keyword>
<keyword id="KW-0633">Potassium transport</keyword>
<keyword id="KW-1278">Translocase</keyword>
<keyword id="KW-0812">Transmembrane</keyword>
<keyword id="KW-1133">Transmembrane helix</keyword>
<keyword id="KW-0813">Transport</keyword>
<reference key="1">
    <citation type="journal article" date="2008" name="J. Bacteriol.">
        <title>The complete genome sequence of Escherichia coli DH10B: insights into the biology of a laboratory workhorse.</title>
        <authorList>
            <person name="Durfee T."/>
            <person name="Nelson R."/>
            <person name="Baldwin S."/>
            <person name="Plunkett G. III"/>
            <person name="Burland V."/>
            <person name="Mau B."/>
            <person name="Petrosino J.F."/>
            <person name="Qin X."/>
            <person name="Muzny D.M."/>
            <person name="Ayele M."/>
            <person name="Gibbs R.A."/>
            <person name="Csorgo B."/>
            <person name="Posfai G."/>
            <person name="Weinstock G.M."/>
            <person name="Blattner F.R."/>
        </authorList>
    </citation>
    <scope>NUCLEOTIDE SEQUENCE [LARGE SCALE GENOMIC DNA]</scope>
    <source>
        <strain>K12 / DH10B</strain>
    </source>
</reference>
<comment type="function">
    <text evidence="1">Part of the high-affinity ATP-driven potassium transport (or Kdp) system, which catalyzes the hydrolysis of ATP coupled with the electrogenic transport of potassium into the cytoplasm. This subunit is responsible for energy coupling to the transport system and for the release of the potassium ions to the cytoplasm.</text>
</comment>
<comment type="catalytic activity">
    <reaction evidence="1">
        <text>K(+)(out) + ATP + H2O = K(+)(in) + ADP + phosphate + H(+)</text>
        <dbReference type="Rhea" id="RHEA:16777"/>
        <dbReference type="ChEBI" id="CHEBI:15377"/>
        <dbReference type="ChEBI" id="CHEBI:15378"/>
        <dbReference type="ChEBI" id="CHEBI:29103"/>
        <dbReference type="ChEBI" id="CHEBI:30616"/>
        <dbReference type="ChEBI" id="CHEBI:43474"/>
        <dbReference type="ChEBI" id="CHEBI:456216"/>
        <dbReference type="EC" id="7.2.2.6"/>
    </reaction>
    <physiologicalReaction direction="left-to-right" evidence="1">
        <dbReference type="Rhea" id="RHEA:16778"/>
    </physiologicalReaction>
</comment>
<comment type="subunit">
    <text evidence="1">The system is composed of three essential subunits: KdpA, KdpB and KdpC.</text>
</comment>
<comment type="subcellular location">
    <subcellularLocation>
        <location evidence="1">Cell inner membrane</location>
        <topology evidence="1">Multi-pass membrane protein</topology>
    </subcellularLocation>
</comment>
<comment type="similarity">
    <text evidence="1">Belongs to the cation transport ATPase (P-type) (TC 3.A.3) family. Type IA subfamily.</text>
</comment>
<proteinExistence type="inferred from homology"/>
<evidence type="ECO:0000255" key="1">
    <source>
        <dbReference type="HAMAP-Rule" id="MF_00285"/>
    </source>
</evidence>
<dbReference type="EC" id="7.2.2.6" evidence="1"/>
<dbReference type="EMBL" id="CP000948">
    <property type="protein sequence ID" value="ACB01906.1"/>
    <property type="molecule type" value="Genomic_DNA"/>
</dbReference>
<dbReference type="RefSeq" id="WP_000087939.1">
    <property type="nucleotide sequence ID" value="NC_010473.1"/>
</dbReference>
<dbReference type="SMR" id="B1X6M8"/>
<dbReference type="KEGG" id="ecd:ECDH10B_0763"/>
<dbReference type="HOGENOM" id="CLU_025728_2_0_6"/>
<dbReference type="GO" id="GO:0005886">
    <property type="term" value="C:plasma membrane"/>
    <property type="evidence" value="ECO:0007669"/>
    <property type="project" value="UniProtKB-SubCell"/>
</dbReference>
<dbReference type="GO" id="GO:0005524">
    <property type="term" value="F:ATP binding"/>
    <property type="evidence" value="ECO:0007669"/>
    <property type="project" value="UniProtKB-UniRule"/>
</dbReference>
<dbReference type="GO" id="GO:0016887">
    <property type="term" value="F:ATP hydrolysis activity"/>
    <property type="evidence" value="ECO:0007669"/>
    <property type="project" value="InterPro"/>
</dbReference>
<dbReference type="GO" id="GO:0000287">
    <property type="term" value="F:magnesium ion binding"/>
    <property type="evidence" value="ECO:0007669"/>
    <property type="project" value="UniProtKB-UniRule"/>
</dbReference>
<dbReference type="GO" id="GO:0008556">
    <property type="term" value="F:P-type potassium transmembrane transporter activity"/>
    <property type="evidence" value="ECO:0007669"/>
    <property type="project" value="UniProtKB-UniRule"/>
</dbReference>
<dbReference type="CDD" id="cd02078">
    <property type="entry name" value="P-type_ATPase_K"/>
    <property type="match status" value="1"/>
</dbReference>
<dbReference type="FunFam" id="2.70.150.10:FF:000010">
    <property type="entry name" value="Potassium-transporting ATPase ATP-binding subunit"/>
    <property type="match status" value="1"/>
</dbReference>
<dbReference type="FunFam" id="3.40.1110.10:FF:000007">
    <property type="entry name" value="Potassium-transporting ATPase ATP-binding subunit"/>
    <property type="match status" value="1"/>
</dbReference>
<dbReference type="Gene3D" id="3.40.1110.10">
    <property type="entry name" value="Calcium-transporting ATPase, cytoplasmic domain N"/>
    <property type="match status" value="1"/>
</dbReference>
<dbReference type="Gene3D" id="2.70.150.10">
    <property type="entry name" value="Calcium-transporting ATPase, cytoplasmic transduction domain A"/>
    <property type="match status" value="1"/>
</dbReference>
<dbReference type="Gene3D" id="3.40.50.1000">
    <property type="entry name" value="HAD superfamily/HAD-like"/>
    <property type="match status" value="1"/>
</dbReference>
<dbReference type="HAMAP" id="MF_00285">
    <property type="entry name" value="KdpB"/>
    <property type="match status" value="1"/>
</dbReference>
<dbReference type="InterPro" id="IPR023299">
    <property type="entry name" value="ATPase_P-typ_cyto_dom_N"/>
</dbReference>
<dbReference type="InterPro" id="IPR018303">
    <property type="entry name" value="ATPase_P-typ_P_site"/>
</dbReference>
<dbReference type="InterPro" id="IPR023298">
    <property type="entry name" value="ATPase_P-typ_TM_dom_sf"/>
</dbReference>
<dbReference type="InterPro" id="IPR008250">
    <property type="entry name" value="ATPase_P-typ_transduc_dom_A_sf"/>
</dbReference>
<dbReference type="InterPro" id="IPR036412">
    <property type="entry name" value="HAD-like_sf"/>
</dbReference>
<dbReference type="InterPro" id="IPR023214">
    <property type="entry name" value="HAD_sf"/>
</dbReference>
<dbReference type="InterPro" id="IPR006391">
    <property type="entry name" value="P-type_ATPase_bsu_IA"/>
</dbReference>
<dbReference type="InterPro" id="IPR001757">
    <property type="entry name" value="P_typ_ATPase"/>
</dbReference>
<dbReference type="InterPro" id="IPR044492">
    <property type="entry name" value="P_typ_ATPase_HD_dom"/>
</dbReference>
<dbReference type="NCBIfam" id="TIGR01494">
    <property type="entry name" value="ATPase_P-type"/>
    <property type="match status" value="2"/>
</dbReference>
<dbReference type="NCBIfam" id="TIGR01497">
    <property type="entry name" value="kdpB"/>
    <property type="match status" value="1"/>
</dbReference>
<dbReference type="PANTHER" id="PTHR43743">
    <property type="entry name" value="POTASSIUM-TRANSPORTING ATPASE ATP-BINDING SUBUNIT"/>
    <property type="match status" value="1"/>
</dbReference>
<dbReference type="PANTHER" id="PTHR43743:SF1">
    <property type="entry name" value="POTASSIUM-TRANSPORTING ATPASE ATP-BINDING SUBUNIT"/>
    <property type="match status" value="1"/>
</dbReference>
<dbReference type="Pfam" id="PF00122">
    <property type="entry name" value="E1-E2_ATPase"/>
    <property type="match status" value="1"/>
</dbReference>
<dbReference type="Pfam" id="PF00702">
    <property type="entry name" value="Hydrolase"/>
    <property type="match status" value="1"/>
</dbReference>
<dbReference type="PRINTS" id="PR00119">
    <property type="entry name" value="CATATPASE"/>
</dbReference>
<dbReference type="SFLD" id="SFLDG00002">
    <property type="entry name" value="C1.7:_P-type_atpase_like"/>
    <property type="match status" value="1"/>
</dbReference>
<dbReference type="SFLD" id="SFLDF00027">
    <property type="entry name" value="p-type_atpase"/>
    <property type="match status" value="1"/>
</dbReference>
<dbReference type="SUPFAM" id="SSF81653">
    <property type="entry name" value="Calcium ATPase, transduction domain A"/>
    <property type="match status" value="1"/>
</dbReference>
<dbReference type="SUPFAM" id="SSF81665">
    <property type="entry name" value="Calcium ATPase, transmembrane domain M"/>
    <property type="match status" value="1"/>
</dbReference>
<dbReference type="SUPFAM" id="SSF56784">
    <property type="entry name" value="HAD-like"/>
    <property type="match status" value="1"/>
</dbReference>
<dbReference type="SUPFAM" id="SSF81660">
    <property type="entry name" value="Metal cation-transporting ATPase, ATP-binding domain N"/>
    <property type="match status" value="1"/>
</dbReference>
<dbReference type="PROSITE" id="PS00154">
    <property type="entry name" value="ATPASE_E1_E2"/>
    <property type="match status" value="1"/>
</dbReference>
<feature type="chain" id="PRO_1000114952" description="Potassium-transporting ATPase ATP-binding subunit">
    <location>
        <begin position="1"/>
        <end position="682"/>
    </location>
</feature>
<feature type="transmembrane region" description="Helical" evidence="1">
    <location>
        <begin position="34"/>
        <end position="54"/>
    </location>
</feature>
<feature type="transmembrane region" description="Helical" evidence="1">
    <location>
        <begin position="62"/>
        <end position="82"/>
    </location>
</feature>
<feature type="transmembrane region" description="Helical" evidence="1">
    <location>
        <begin position="219"/>
        <end position="239"/>
    </location>
</feature>
<feature type="transmembrane region" description="Helical" evidence="1">
    <location>
        <begin position="254"/>
        <end position="274"/>
    </location>
</feature>
<feature type="transmembrane region" description="Helical" evidence="1">
    <location>
        <begin position="588"/>
        <end position="608"/>
    </location>
</feature>
<feature type="transmembrane region" description="Helical" evidence="1">
    <location>
        <begin position="616"/>
        <end position="636"/>
    </location>
</feature>
<feature type="transmembrane region" description="Helical" evidence="1">
    <location>
        <begin position="656"/>
        <end position="676"/>
    </location>
</feature>
<feature type="active site" description="4-aspartylphosphate intermediate" evidence="1">
    <location>
        <position position="307"/>
    </location>
</feature>
<feature type="binding site" evidence="1">
    <location>
        <position position="344"/>
    </location>
    <ligand>
        <name>ATP</name>
        <dbReference type="ChEBI" id="CHEBI:30616"/>
    </ligand>
</feature>
<feature type="binding site" evidence="1">
    <location>
        <position position="348"/>
    </location>
    <ligand>
        <name>ATP</name>
        <dbReference type="ChEBI" id="CHEBI:30616"/>
    </ligand>
</feature>
<feature type="binding site" evidence="1">
    <location>
        <begin position="377"/>
        <end position="384"/>
    </location>
    <ligand>
        <name>ATP</name>
        <dbReference type="ChEBI" id="CHEBI:30616"/>
    </ligand>
</feature>
<feature type="binding site" evidence="1">
    <location>
        <position position="395"/>
    </location>
    <ligand>
        <name>ATP</name>
        <dbReference type="ChEBI" id="CHEBI:30616"/>
    </ligand>
</feature>
<feature type="binding site" evidence="1">
    <location>
        <position position="518"/>
    </location>
    <ligand>
        <name>Mg(2+)</name>
        <dbReference type="ChEBI" id="CHEBI:18420"/>
    </ligand>
</feature>
<feature type="binding site" evidence="1">
    <location>
        <position position="522"/>
    </location>
    <ligand>
        <name>Mg(2+)</name>
        <dbReference type="ChEBI" id="CHEBI:18420"/>
    </ligand>
</feature>
<name>KDPB_ECODH</name>
<organism>
    <name type="scientific">Escherichia coli (strain K12 / DH10B)</name>
    <dbReference type="NCBI Taxonomy" id="316385"/>
    <lineage>
        <taxon>Bacteria</taxon>
        <taxon>Pseudomonadati</taxon>
        <taxon>Pseudomonadota</taxon>
        <taxon>Gammaproteobacteria</taxon>
        <taxon>Enterobacterales</taxon>
        <taxon>Enterobacteriaceae</taxon>
        <taxon>Escherichia</taxon>
    </lineage>
</organism>